<keyword id="KW-0229">DNA integration</keyword>
<keyword id="KW-0233">DNA recombination</keyword>
<keyword id="KW-0238">DNA-binding</keyword>
<keyword id="KW-0614">Plasmid</keyword>
<keyword id="KW-1179">Viral genome integration</keyword>
<keyword id="KW-1160">Virus entry into host cell</keyword>
<geneLocation type="plasmid">
    <name>pL2</name>
</geneLocation>
<geneLocation type="plasmid">
    <name>pLGV440</name>
</geneLocation>
<feature type="chain" id="PRO_0000391803" description="Virulence plasmid integrase pGP8-D">
    <location>
        <begin position="1"/>
        <end position="330"/>
    </location>
</feature>
<feature type="domain" description="Core-binding (CB)" evidence="2">
    <location>
        <begin position="39"/>
        <end position="124"/>
    </location>
</feature>
<feature type="domain" description="Tyr recombinase" evidence="1">
    <location>
        <begin position="152"/>
        <end position="327"/>
    </location>
</feature>
<feature type="active site" evidence="1">
    <location>
        <position position="189"/>
    </location>
</feature>
<feature type="active site" evidence="1">
    <location>
        <position position="214"/>
    </location>
</feature>
<feature type="active site" evidence="1">
    <location>
        <position position="279"/>
    </location>
</feature>
<feature type="active site" evidence="1">
    <location>
        <position position="282"/>
    </location>
</feature>
<feature type="active site" evidence="1">
    <location>
        <position position="305"/>
    </location>
</feature>
<feature type="active site" description="O-(3'-phospho-DNA)-tyrosine intermediate" evidence="1">
    <location>
        <position position="314"/>
    </location>
</feature>
<name>GP8D_CHLT2</name>
<sequence>MGKGILSLQQEMSLEYSEKSYQEVLKIRQESYWKRMKSFSLFEVIMHWTASLNKHTCRSYRGSFLSLEKIGLLSLDMNLQEFSLLNHNLILDAIKKVSSAKTSWTEGTKQVRAASYISLTRFLNRMTQGIVAIAQPSKQENSRTFFKTREIVKTDAMNSLQTASFLKELKKINARDWLIAQTMLQGGKRSSEVLSLEISQICFQQATISFSQLKNRQTEKRIIITYPQKFMHFLQEYIGQRRGFVFVTRSGKMVGLRQIARTFSQAGLQAAIPFKITPHVLRATAVTEYKRLGCSDSDIMKVTGHATAKMIFAYDKSSREDNASKKMALI</sequence>
<gene>
    <name type="ordered locus">pL2-02</name>
</gene>
<dbReference type="EMBL" id="X07547">
    <property type="protein sequence ID" value="CAA30420.1"/>
    <property type="molecule type" value="Genomic_DNA"/>
</dbReference>
<dbReference type="EMBL" id="AM886278">
    <property type="protein sequence ID" value="CAP09062.1"/>
    <property type="molecule type" value="Genomic_DNA"/>
</dbReference>
<dbReference type="PIR" id="H37386">
    <property type="entry name" value="H37386"/>
</dbReference>
<dbReference type="RefSeq" id="NP_040381.1">
    <property type="nucleotide sequence ID" value="NC_001372.1"/>
</dbReference>
<dbReference type="RefSeq" id="YP_001654085.1">
    <property type="nucleotide sequence ID" value="NC_010286.1"/>
</dbReference>
<dbReference type="RefSeq" id="YP_002842023.1">
    <property type="nucleotide sequence ID" value="NC_012625.1"/>
</dbReference>
<dbReference type="RefSeq" id="YP_002842031.1">
    <property type="nucleotide sequence ID" value="NC_012626.1"/>
</dbReference>
<dbReference type="RefSeq" id="YP_002842039.1">
    <property type="nucleotide sequence ID" value="NC_012627.1"/>
</dbReference>
<dbReference type="SMR" id="B0BCM4"/>
<dbReference type="GO" id="GO:0003677">
    <property type="term" value="F:DNA binding"/>
    <property type="evidence" value="ECO:0007669"/>
    <property type="project" value="UniProtKB-KW"/>
</dbReference>
<dbReference type="GO" id="GO:0015074">
    <property type="term" value="P:DNA integration"/>
    <property type="evidence" value="ECO:0007669"/>
    <property type="project" value="UniProtKB-KW"/>
</dbReference>
<dbReference type="GO" id="GO:0006310">
    <property type="term" value="P:DNA recombination"/>
    <property type="evidence" value="ECO:0007669"/>
    <property type="project" value="UniProtKB-KW"/>
</dbReference>
<dbReference type="GO" id="GO:0075713">
    <property type="term" value="P:establishment of integrated proviral latency"/>
    <property type="evidence" value="ECO:0007669"/>
    <property type="project" value="UniProtKB-KW"/>
</dbReference>
<dbReference type="GO" id="GO:0046718">
    <property type="term" value="P:symbiont entry into host cell"/>
    <property type="evidence" value="ECO:0007669"/>
    <property type="project" value="UniProtKB-KW"/>
</dbReference>
<dbReference type="GO" id="GO:0044826">
    <property type="term" value="P:viral genome integration into host DNA"/>
    <property type="evidence" value="ECO:0007669"/>
    <property type="project" value="UniProtKB-KW"/>
</dbReference>
<dbReference type="CDD" id="cd00397">
    <property type="entry name" value="DNA_BRE_C"/>
    <property type="match status" value="1"/>
</dbReference>
<dbReference type="Gene3D" id="1.10.443.10">
    <property type="entry name" value="Intergrase catalytic core"/>
    <property type="match status" value="1"/>
</dbReference>
<dbReference type="InterPro" id="IPR044068">
    <property type="entry name" value="CB"/>
</dbReference>
<dbReference type="InterPro" id="IPR011010">
    <property type="entry name" value="DNA_brk_join_enz"/>
</dbReference>
<dbReference type="InterPro" id="IPR013762">
    <property type="entry name" value="Integrase-like_cat_sf"/>
</dbReference>
<dbReference type="InterPro" id="IPR002104">
    <property type="entry name" value="Integrase_catalytic"/>
</dbReference>
<dbReference type="Pfam" id="PF00589">
    <property type="entry name" value="Phage_integrase"/>
    <property type="match status" value="1"/>
</dbReference>
<dbReference type="SUPFAM" id="SSF56349">
    <property type="entry name" value="DNA breaking-rejoining enzymes"/>
    <property type="match status" value="1"/>
</dbReference>
<dbReference type="PROSITE" id="PS51900">
    <property type="entry name" value="CB"/>
    <property type="match status" value="1"/>
</dbReference>
<dbReference type="PROSITE" id="PS51898">
    <property type="entry name" value="TYR_RECOMBINASE"/>
    <property type="match status" value="1"/>
</dbReference>
<protein>
    <recommendedName>
        <fullName>Virulence plasmid integrase pGP8-D</fullName>
    </recommendedName>
    <alternativeName>
        <fullName>Protein N-1/N-2</fullName>
    </alternativeName>
</protein>
<accession>B0BCM4</accession>
<accession>P08788</accession>
<accession>P10554</accession>
<proteinExistence type="inferred from homology"/>
<reference key="1">
    <citation type="journal article" date="1988" name="Mol. Microbiol.">
        <title>The structure of a plasmid of Chlamydia trachomatis believed to be required for growth within mammalian cells.</title>
        <authorList>
            <person name="Comanducci M."/>
            <person name="Ricci S."/>
            <person name="Ratti G."/>
        </authorList>
    </citation>
    <scope>NUCLEOTIDE SEQUENCE [GENOMIC DNA]</scope>
    <source>
        <plasmid>pLGV440</plasmid>
    </source>
</reference>
<reference key="2">
    <citation type="journal article" date="2008" name="Genome Res.">
        <title>Chlamydia trachomatis: genome sequence analysis of lymphogranuloma venereum isolates.</title>
        <authorList>
            <person name="Thomson N.R."/>
            <person name="Holden M.T.G."/>
            <person name="Carder C."/>
            <person name="Lennard N."/>
            <person name="Lockey S.J."/>
            <person name="Marsh P."/>
            <person name="Skipp P."/>
            <person name="O'Connor C.D."/>
            <person name="Goodhead I."/>
            <person name="Norbertzcak H."/>
            <person name="Harris B."/>
            <person name="Ormond D."/>
            <person name="Rance R."/>
            <person name="Quail M.A."/>
            <person name="Parkhill J."/>
            <person name="Stephens R.S."/>
            <person name="Clarke I.N."/>
        </authorList>
    </citation>
    <scope>NUCLEOTIDE SEQUENCE [LARGE SCALE GENOMIC DNA]</scope>
    <source>
        <strain>ATCC VR-902B / DSM 19102 / 434/Bu</strain>
        <plasmid>pL2</plasmid>
    </source>
</reference>
<evidence type="ECO:0000255" key="1">
    <source>
        <dbReference type="PROSITE-ProRule" id="PRU01246"/>
    </source>
</evidence>
<evidence type="ECO:0000255" key="2">
    <source>
        <dbReference type="PROSITE-ProRule" id="PRU01248"/>
    </source>
</evidence>
<evidence type="ECO:0000305" key="3"/>
<comment type="miscellaneous">
    <text>pGP8-D is required for growth within mammalian cells.</text>
</comment>
<comment type="similarity">
    <text evidence="3">Belongs to the 'phage' integrase family.</text>
</comment>
<organism>
    <name type="scientific">Chlamydia trachomatis serovar L2 (strain ATCC VR-902B / DSM 19102 / 434/Bu)</name>
    <dbReference type="NCBI Taxonomy" id="471472"/>
    <lineage>
        <taxon>Bacteria</taxon>
        <taxon>Pseudomonadati</taxon>
        <taxon>Chlamydiota</taxon>
        <taxon>Chlamydiia</taxon>
        <taxon>Chlamydiales</taxon>
        <taxon>Chlamydiaceae</taxon>
        <taxon>Chlamydia/Chlamydophila group</taxon>
        <taxon>Chlamydia</taxon>
    </lineage>
</organism>